<name>EFTS_PERMH</name>
<feature type="chain" id="PRO_1000117594" description="Elongation factor Ts">
    <location>
        <begin position="1"/>
        <end position="197"/>
    </location>
</feature>
<feature type="region of interest" description="Involved in Mg(2+) ion dislocation from EF-Tu" evidence="1">
    <location>
        <begin position="81"/>
        <end position="84"/>
    </location>
</feature>
<protein>
    <recommendedName>
        <fullName evidence="1">Elongation factor Ts</fullName>
        <shortName evidence="1">EF-Ts</shortName>
    </recommendedName>
</protein>
<dbReference type="EMBL" id="CP001230">
    <property type="protein sequence ID" value="ACO03822.1"/>
    <property type="molecule type" value="Genomic_DNA"/>
</dbReference>
<dbReference type="RefSeq" id="WP_012676061.1">
    <property type="nucleotide sequence ID" value="NC_012440.1"/>
</dbReference>
<dbReference type="SMR" id="C0QTL3"/>
<dbReference type="STRING" id="123214.PERMA_0232"/>
<dbReference type="PaxDb" id="123214-PERMA_0232"/>
<dbReference type="KEGG" id="pmx:PERMA_0232"/>
<dbReference type="eggNOG" id="COG0264">
    <property type="taxonomic scope" value="Bacteria"/>
</dbReference>
<dbReference type="HOGENOM" id="CLU_047155_1_1_0"/>
<dbReference type="OrthoDB" id="9808348at2"/>
<dbReference type="Proteomes" id="UP000001366">
    <property type="component" value="Chromosome"/>
</dbReference>
<dbReference type="GO" id="GO:0005737">
    <property type="term" value="C:cytoplasm"/>
    <property type="evidence" value="ECO:0007669"/>
    <property type="project" value="UniProtKB-SubCell"/>
</dbReference>
<dbReference type="GO" id="GO:0003746">
    <property type="term" value="F:translation elongation factor activity"/>
    <property type="evidence" value="ECO:0007669"/>
    <property type="project" value="UniProtKB-UniRule"/>
</dbReference>
<dbReference type="CDD" id="cd14275">
    <property type="entry name" value="UBA_EF-Ts"/>
    <property type="match status" value="1"/>
</dbReference>
<dbReference type="FunFam" id="1.10.286.20:FF:000001">
    <property type="entry name" value="Elongation factor Ts"/>
    <property type="match status" value="1"/>
</dbReference>
<dbReference type="FunFam" id="1.10.8.10:FF:000001">
    <property type="entry name" value="Elongation factor Ts"/>
    <property type="match status" value="1"/>
</dbReference>
<dbReference type="Gene3D" id="1.10.286.20">
    <property type="match status" value="1"/>
</dbReference>
<dbReference type="Gene3D" id="1.10.8.10">
    <property type="entry name" value="DNA helicase RuvA subunit, C-terminal domain"/>
    <property type="match status" value="1"/>
</dbReference>
<dbReference type="Gene3D" id="3.30.479.20">
    <property type="entry name" value="Elongation factor Ts, dimerisation domain"/>
    <property type="match status" value="1"/>
</dbReference>
<dbReference type="HAMAP" id="MF_00050">
    <property type="entry name" value="EF_Ts"/>
    <property type="match status" value="1"/>
</dbReference>
<dbReference type="InterPro" id="IPR036402">
    <property type="entry name" value="EF-Ts_dimer_sf"/>
</dbReference>
<dbReference type="InterPro" id="IPR001816">
    <property type="entry name" value="Transl_elong_EFTs/EF1B"/>
</dbReference>
<dbReference type="InterPro" id="IPR014039">
    <property type="entry name" value="Transl_elong_EFTs/EF1B_dimer"/>
</dbReference>
<dbReference type="InterPro" id="IPR018101">
    <property type="entry name" value="Transl_elong_Ts_CS"/>
</dbReference>
<dbReference type="InterPro" id="IPR009060">
    <property type="entry name" value="UBA-like_sf"/>
</dbReference>
<dbReference type="NCBIfam" id="TIGR00116">
    <property type="entry name" value="tsf"/>
    <property type="match status" value="2"/>
</dbReference>
<dbReference type="PANTHER" id="PTHR11741">
    <property type="entry name" value="ELONGATION FACTOR TS"/>
    <property type="match status" value="1"/>
</dbReference>
<dbReference type="PANTHER" id="PTHR11741:SF0">
    <property type="entry name" value="ELONGATION FACTOR TS, MITOCHONDRIAL"/>
    <property type="match status" value="1"/>
</dbReference>
<dbReference type="Pfam" id="PF00889">
    <property type="entry name" value="EF_TS"/>
    <property type="match status" value="1"/>
</dbReference>
<dbReference type="SUPFAM" id="SSF54713">
    <property type="entry name" value="Elongation factor Ts (EF-Ts), dimerisation domain"/>
    <property type="match status" value="1"/>
</dbReference>
<dbReference type="SUPFAM" id="SSF46934">
    <property type="entry name" value="UBA-like"/>
    <property type="match status" value="1"/>
</dbReference>
<dbReference type="PROSITE" id="PS01126">
    <property type="entry name" value="EF_TS_1"/>
    <property type="match status" value="1"/>
</dbReference>
<dbReference type="PROSITE" id="PS01127">
    <property type="entry name" value="EF_TS_2"/>
    <property type="match status" value="1"/>
</dbReference>
<sequence>MATDAKLVKTLREMTGAGILECKKALEETGGNLEEAVELLRKRGIAKAAKKAGRETKEGIIHSYIHAGGRVGVLLELNCETDFVARNEVFKELANEIALQIAAMKPQYVSREDIPREVIEKEGEIAREAAIAEGKPEHIAEKIAEGKLEKFFKEVCLLEQPYIKDDKKTIEDLIKEYIAKLGENIKVSRFCRYEIGE</sequence>
<comment type="function">
    <text evidence="1">Associates with the EF-Tu.GDP complex and induces the exchange of GDP to GTP. It remains bound to the aminoacyl-tRNA.EF-Tu.GTP complex up to the GTP hydrolysis stage on the ribosome.</text>
</comment>
<comment type="subcellular location">
    <subcellularLocation>
        <location evidence="1">Cytoplasm</location>
    </subcellularLocation>
</comment>
<comment type="similarity">
    <text evidence="1">Belongs to the EF-Ts family.</text>
</comment>
<proteinExistence type="inferred from homology"/>
<accession>C0QTL3</accession>
<gene>
    <name evidence="1" type="primary">tsf</name>
    <name type="ordered locus">PERMA_0232</name>
</gene>
<evidence type="ECO:0000255" key="1">
    <source>
        <dbReference type="HAMAP-Rule" id="MF_00050"/>
    </source>
</evidence>
<reference key="1">
    <citation type="journal article" date="2009" name="J. Bacteriol.">
        <title>Complete and draft genome sequences of six members of the Aquificales.</title>
        <authorList>
            <person name="Reysenbach A.-L."/>
            <person name="Hamamura N."/>
            <person name="Podar M."/>
            <person name="Griffiths E."/>
            <person name="Ferreira S."/>
            <person name="Hochstein R."/>
            <person name="Heidelberg J."/>
            <person name="Johnson J."/>
            <person name="Mead D."/>
            <person name="Pohorille A."/>
            <person name="Sarmiento M."/>
            <person name="Schweighofer K."/>
            <person name="Seshadri R."/>
            <person name="Voytek M.A."/>
        </authorList>
    </citation>
    <scope>NUCLEOTIDE SEQUENCE [LARGE SCALE GENOMIC DNA]</scope>
    <source>
        <strain>DSM 14350 / EX-H1</strain>
    </source>
</reference>
<keyword id="KW-0963">Cytoplasm</keyword>
<keyword id="KW-0251">Elongation factor</keyword>
<keyword id="KW-0648">Protein biosynthesis</keyword>
<keyword id="KW-1185">Reference proteome</keyword>
<organism>
    <name type="scientific">Persephonella marina (strain DSM 14350 / EX-H1)</name>
    <dbReference type="NCBI Taxonomy" id="123214"/>
    <lineage>
        <taxon>Bacteria</taxon>
        <taxon>Pseudomonadati</taxon>
        <taxon>Aquificota</taxon>
        <taxon>Aquificia</taxon>
        <taxon>Aquificales</taxon>
        <taxon>Hydrogenothermaceae</taxon>
        <taxon>Persephonella</taxon>
    </lineage>
</organism>